<proteinExistence type="predicted"/>
<name>YP76_CAEEL</name>
<evidence type="ECO:0000255" key="1"/>
<evidence type="ECO:0000305" key="2"/>
<reference key="1">
    <citation type="journal article" date="1998" name="Science">
        <title>Genome sequence of the nematode C. elegans: a platform for investigating biology.</title>
        <authorList>
            <consortium name="The C. elegans sequencing consortium"/>
        </authorList>
    </citation>
    <scope>NUCLEOTIDE SEQUENCE [LARGE SCALE GENOMIC DNA]</scope>
    <source>
        <strain>Bristol N2</strain>
    </source>
</reference>
<gene>
    <name type="ORF">B0228.6</name>
</gene>
<accession>Q09223</accession>
<comment type="subcellular location">
    <subcellularLocation>
        <location evidence="2">Membrane</location>
        <topology evidence="2">Single-pass membrane protein</topology>
    </subcellularLocation>
</comment>
<protein>
    <recommendedName>
        <fullName>Uncharacterized protein B0228.6</fullName>
    </recommendedName>
</protein>
<sequence length="293" mass="34314">MDSDWESTFEFVSETGQIKKRGSKTSELKQNETTDAVVVNNEKVKKRRNSKDSHIVLAKEIFAVAFFSLGMSCLLMADVSTFLWGINNPNSQQSKSIGSNIDQMSSEEFQQKVHDYMSEIQRTGRDKRPSRRFVDSARFYILSEIEPIELALRREWIPDHSFFEGVQEFIRGMEWENTFEEELFVRGVPNFDHDFESEEMTLKTTLDGKNYNNQFLNLGRKEIIGKHHSMEYFISGRTLIRLVKNEGQELSRTEYYLKHGDLHVYDKRGNLDCTRVYRSPTISPMLQSKIRQF</sequence>
<feature type="chain" id="PRO_0000065047" description="Uncharacterized protein B0228.6">
    <location>
        <begin position="1"/>
        <end position="293"/>
    </location>
</feature>
<feature type="transmembrane region" description="Helical" evidence="1">
    <location>
        <begin position="55"/>
        <end position="77"/>
    </location>
</feature>
<organism>
    <name type="scientific">Caenorhabditis elegans</name>
    <dbReference type="NCBI Taxonomy" id="6239"/>
    <lineage>
        <taxon>Eukaryota</taxon>
        <taxon>Metazoa</taxon>
        <taxon>Ecdysozoa</taxon>
        <taxon>Nematoda</taxon>
        <taxon>Chromadorea</taxon>
        <taxon>Rhabditida</taxon>
        <taxon>Rhabditina</taxon>
        <taxon>Rhabditomorpha</taxon>
        <taxon>Rhabditoidea</taxon>
        <taxon>Rhabditidae</taxon>
        <taxon>Peloderinae</taxon>
        <taxon>Caenorhabditis</taxon>
    </lineage>
</organism>
<dbReference type="EMBL" id="FO080130">
    <property type="protein sequence ID" value="CCD61450.2"/>
    <property type="molecule type" value="Genomic_DNA"/>
</dbReference>
<dbReference type="PIR" id="T29045">
    <property type="entry name" value="T29045"/>
</dbReference>
<dbReference type="RefSeq" id="NP_495627.3">
    <property type="nucleotide sequence ID" value="NM_063226.3"/>
</dbReference>
<dbReference type="FunCoup" id="Q09223">
    <property type="interactions" value="293"/>
</dbReference>
<dbReference type="PaxDb" id="6239-B0228.6"/>
<dbReference type="EnsemblMetazoa" id="B0228.6.1">
    <property type="protein sequence ID" value="B0228.6.1"/>
    <property type="gene ID" value="WBGene00015063"/>
</dbReference>
<dbReference type="GeneID" id="174251"/>
<dbReference type="KEGG" id="cel:CELE_B0228.6"/>
<dbReference type="UCSC" id="B0228.6">
    <property type="organism name" value="c. elegans"/>
</dbReference>
<dbReference type="AGR" id="WB:WBGene00015063"/>
<dbReference type="CTD" id="174251"/>
<dbReference type="WormBase" id="B0228.6">
    <property type="protein sequence ID" value="CE47904"/>
    <property type="gene ID" value="WBGene00015063"/>
</dbReference>
<dbReference type="eggNOG" id="ENOG502TDRB">
    <property type="taxonomic scope" value="Eukaryota"/>
</dbReference>
<dbReference type="HOGENOM" id="CLU_915964_0_0_1"/>
<dbReference type="InParanoid" id="Q09223"/>
<dbReference type="OMA" id="FELEEMT"/>
<dbReference type="OrthoDB" id="10294958at2759"/>
<dbReference type="PRO" id="PR:Q09223"/>
<dbReference type="Proteomes" id="UP000001940">
    <property type="component" value="Chromosome II"/>
</dbReference>
<dbReference type="Bgee" id="WBGene00015063">
    <property type="expression patterns" value="Expressed in pharyngeal muscle cell (C elegans) and 3 other cell types or tissues"/>
</dbReference>
<dbReference type="GO" id="GO:0016020">
    <property type="term" value="C:membrane"/>
    <property type="evidence" value="ECO:0007669"/>
    <property type="project" value="UniProtKB-SubCell"/>
</dbReference>
<keyword id="KW-0472">Membrane</keyword>
<keyword id="KW-1185">Reference proteome</keyword>
<keyword id="KW-0812">Transmembrane</keyword>
<keyword id="KW-1133">Transmembrane helix</keyword>